<feature type="chain" id="PRO_0000398618" description="Serine/threonine-protein kinase kin-29">
    <location>
        <begin position="1"/>
        <end position="813"/>
    </location>
</feature>
<feature type="domain" description="Protein kinase" evidence="4">
    <location>
        <begin position="18"/>
        <end position="269"/>
    </location>
</feature>
<feature type="region of interest" description="Disordered" evidence="6">
    <location>
        <begin position="383"/>
        <end position="412"/>
    </location>
</feature>
<feature type="compositionally biased region" description="Acidic residues" evidence="6">
    <location>
        <begin position="388"/>
        <end position="400"/>
    </location>
</feature>
<feature type="active site" description="Proton acceptor" evidence="2 4 5">
    <location>
        <position position="140"/>
    </location>
</feature>
<feature type="binding site" evidence="2 4">
    <location>
        <begin position="24"/>
        <end position="32"/>
    </location>
    <ligand>
        <name>ATP</name>
        <dbReference type="ChEBI" id="CHEBI:30616"/>
    </ligand>
</feature>
<feature type="binding site" evidence="2 4">
    <location>
        <position position="47"/>
    </location>
    <ligand>
        <name>ATP</name>
        <dbReference type="ChEBI" id="CHEBI:30616"/>
    </ligand>
</feature>
<comment type="function">
    <text evidence="1">Regulates chemoreceptor expression by phosphorylating the hda-4 class II histone deacetylase (HDAC) and inhibiting the gene repression functions of hda-4 and the mef-2 transcription factor, enabling the correct sensing and transduction of food signals. Role in determining body size, the dauer decision and serotonin-mediated egg laying. May modulate the Sma/Mab pathway and regulates development in the later larval stages (By similarity).</text>
</comment>
<comment type="catalytic activity">
    <reaction evidence="3">
        <text>L-seryl-[protein] + ATP = O-phospho-L-seryl-[protein] + ADP + H(+)</text>
        <dbReference type="Rhea" id="RHEA:17989"/>
        <dbReference type="Rhea" id="RHEA-COMP:9863"/>
        <dbReference type="Rhea" id="RHEA-COMP:11604"/>
        <dbReference type="ChEBI" id="CHEBI:15378"/>
        <dbReference type="ChEBI" id="CHEBI:29999"/>
        <dbReference type="ChEBI" id="CHEBI:30616"/>
        <dbReference type="ChEBI" id="CHEBI:83421"/>
        <dbReference type="ChEBI" id="CHEBI:456216"/>
        <dbReference type="EC" id="2.7.11.1"/>
    </reaction>
</comment>
<comment type="catalytic activity">
    <reaction evidence="3">
        <text>L-threonyl-[protein] + ATP = O-phospho-L-threonyl-[protein] + ADP + H(+)</text>
        <dbReference type="Rhea" id="RHEA:46608"/>
        <dbReference type="Rhea" id="RHEA-COMP:11060"/>
        <dbReference type="Rhea" id="RHEA-COMP:11605"/>
        <dbReference type="ChEBI" id="CHEBI:15378"/>
        <dbReference type="ChEBI" id="CHEBI:30013"/>
        <dbReference type="ChEBI" id="CHEBI:30616"/>
        <dbReference type="ChEBI" id="CHEBI:61977"/>
        <dbReference type="ChEBI" id="CHEBI:456216"/>
        <dbReference type="EC" id="2.7.11.1"/>
    </reaction>
</comment>
<comment type="cofactor">
    <cofactor evidence="3">
        <name>Mg(2+)</name>
        <dbReference type="ChEBI" id="CHEBI:18420"/>
    </cofactor>
</comment>
<comment type="subunit">
    <text evidence="3">Interacts with tax-6.</text>
</comment>
<comment type="subcellular location">
    <subcellularLocation>
        <location evidence="3">Cytoplasm</location>
    </subcellularLocation>
    <subcellularLocation>
        <location evidence="3">Nucleus</location>
    </subcellularLocation>
    <text evidence="3">Nuclear in larval stage. Predominantly cytoplasmic in the adult but translocates into the nucleus following heat shock (By similarity).</text>
</comment>
<comment type="PTM">
    <text evidence="3">Autophosphorylated. Elevated cAMP levels appears to act via PKA to directly or indirectly phosphorylate multiple sites on kin-29 and inhibit function (By similarity).</text>
</comment>
<comment type="similarity">
    <text evidence="7">Belongs to the protein kinase superfamily. CAMK Ser/Thr protein kinase family. SNF1 subfamily.</text>
</comment>
<reference evidence="8" key="1">
    <citation type="journal article" date="2003" name="PLoS Biol.">
        <title>The genome sequence of Caenorhabditis briggsae: a platform for comparative genomics.</title>
        <authorList>
            <person name="Stein L.D."/>
            <person name="Bao Z."/>
            <person name="Blasiar D."/>
            <person name="Blumenthal T."/>
            <person name="Brent M.R."/>
            <person name="Chen N."/>
            <person name="Chinwalla A."/>
            <person name="Clarke L."/>
            <person name="Clee C."/>
            <person name="Coghlan A."/>
            <person name="Coulson A."/>
            <person name="D'Eustachio P."/>
            <person name="Fitch D.H.A."/>
            <person name="Fulton L.A."/>
            <person name="Fulton R.E."/>
            <person name="Griffiths-Jones S."/>
            <person name="Harris T.W."/>
            <person name="Hillier L.W."/>
            <person name="Kamath R."/>
            <person name="Kuwabara P.E."/>
            <person name="Mardis E.R."/>
            <person name="Marra M.A."/>
            <person name="Miner T.L."/>
            <person name="Minx P."/>
            <person name="Mullikin J.C."/>
            <person name="Plumb R.W."/>
            <person name="Rogers J."/>
            <person name="Schein J.E."/>
            <person name="Sohrmann M."/>
            <person name="Spieth J."/>
            <person name="Stajich J.E."/>
            <person name="Wei C."/>
            <person name="Willey D."/>
            <person name="Wilson R.K."/>
            <person name="Durbin R.M."/>
            <person name="Waterston R.H."/>
        </authorList>
    </citation>
    <scope>NUCLEOTIDE SEQUENCE [LARGE SCALE GENOMIC DNA]</scope>
    <source>
        <strain evidence="8">AF16</strain>
    </source>
</reference>
<proteinExistence type="inferred from homology"/>
<evidence type="ECO:0000250" key="1"/>
<evidence type="ECO:0000250" key="2">
    <source>
        <dbReference type="UniProtKB" id="P28523"/>
    </source>
</evidence>
<evidence type="ECO:0000250" key="3">
    <source>
        <dbReference type="UniProtKB" id="Q21017"/>
    </source>
</evidence>
<evidence type="ECO:0000255" key="4">
    <source>
        <dbReference type="PROSITE-ProRule" id="PRU00159"/>
    </source>
</evidence>
<evidence type="ECO:0000255" key="5">
    <source>
        <dbReference type="PROSITE-ProRule" id="PRU10027"/>
    </source>
</evidence>
<evidence type="ECO:0000256" key="6">
    <source>
        <dbReference type="SAM" id="MobiDB-lite"/>
    </source>
</evidence>
<evidence type="ECO:0000305" key="7"/>
<evidence type="ECO:0000312" key="8">
    <source>
        <dbReference type="EMBL" id="CAP23209.2"/>
    </source>
</evidence>
<keyword id="KW-0067">ATP-binding</keyword>
<keyword id="KW-0963">Cytoplasm</keyword>
<keyword id="KW-0217">Developmental protein</keyword>
<keyword id="KW-0418">Kinase</keyword>
<keyword id="KW-0460">Magnesium</keyword>
<keyword id="KW-0479">Metal-binding</keyword>
<keyword id="KW-0547">Nucleotide-binding</keyword>
<keyword id="KW-0539">Nucleus</keyword>
<keyword id="KW-1185">Reference proteome</keyword>
<keyword id="KW-0723">Serine/threonine-protein kinase</keyword>
<keyword id="KW-0808">Transferase</keyword>
<gene>
    <name evidence="8" type="primary">kin-29</name>
    <name type="ORF">CBG02036</name>
</gene>
<sequence length="813" mass="90497">MAAAAPKRRMGLEKIGLYDVGRAIGKGNFATVRIARHRIAKTKVAVKSIDVSKLDKENLIKLEREVKIVTMIDHPHIVKCYEIMRVDNMLYIVSEYCSTGELYATLMGKGRVTEDIARKWFTETAAAVSYLHNKGIVHRDLKTENILLGKDSKIKLIDFGFSNFQTPDQLLNTWCGSPPYAAPELLLGNSYDGMKADIWSMGVLLYILVTGGFPFGSESVNDLKRSVLSGVVKIPYWVSVECADFIRKMLVLNPTKRMTIQNVLAHRWMHIRNDVKKQVQNLESSIRPTPSKLNPTIMMFMQQHGKWTEEQIIDAVLGRNFESPIFATYELLADKVKIGSLEGTGEEYPRRGSRGSILSGRANVDEQPLTPTISAHQLAQLNLSSPDCDSDDSSNSDLCDESPLSSLEPNHKQFTLPRGLDLMGNRFENRRHTLCASEQLLSPNLMGQFPPPNLLLNNFTMSPLGFPPMPEGQAAEFPFPSLHPALGAFPTTDLSKMLPVPKSERRASAGETLLPTNFDLQQHLANLSANPVSFPTVEEEGRSYLAKYGGKRNTVHCLGNQIGGGVQNPIPRYQRTPYAKAPPAERRSSWASPSLSQQQQSHLEKIFKDALQTNNDISRLHKEFKNLSHGCAQSQITNEGSSLACPQISITDEYNRQHNIAPSASSFDPVSIFQKNAQEVVFGQRPATAIGFSSTSFSGMSTPEQTTRSMDDRVRSIVCTLPFAEVVEELKSSLNILKIPFAETQEMVYEPQVTEMRRLSLPSGVEIGVAVLPPEHKSHVEFAIINNDSPTSEILCDQLICRLRMIDPNWSSE</sequence>
<protein>
    <recommendedName>
        <fullName>Serine/threonine-protein kinase kin-29</fullName>
        <ecNumber>2.7.11.1</ecNumber>
    </recommendedName>
</protein>
<dbReference type="EC" id="2.7.11.1"/>
<dbReference type="EMBL" id="HE601451">
    <property type="protein sequence ID" value="CAP23209.2"/>
    <property type="molecule type" value="Genomic_DNA"/>
</dbReference>
<dbReference type="SMR" id="A8WRV1"/>
<dbReference type="FunCoup" id="A8WRV1">
    <property type="interactions" value="97"/>
</dbReference>
<dbReference type="STRING" id="6238.A8WRV1"/>
<dbReference type="EnsemblMetazoa" id="CBG02036.1">
    <property type="protein sequence ID" value="CBG02036.1"/>
    <property type="gene ID" value="WBGene00025179"/>
</dbReference>
<dbReference type="WormBase" id="CBG02036">
    <property type="protein sequence ID" value="CBP33973"/>
    <property type="gene ID" value="WBGene00025179"/>
    <property type="gene designation" value="Cbr-kin-29"/>
</dbReference>
<dbReference type="eggNOG" id="KOG0583">
    <property type="taxonomic scope" value="Eukaryota"/>
</dbReference>
<dbReference type="HOGENOM" id="CLU_016746_0_0_1"/>
<dbReference type="InParanoid" id="A8WRV1"/>
<dbReference type="OMA" id="KIPYWVS"/>
<dbReference type="OrthoDB" id="193931at2759"/>
<dbReference type="Proteomes" id="UP000008549">
    <property type="component" value="Unassembled WGS sequence"/>
</dbReference>
<dbReference type="GO" id="GO:0005737">
    <property type="term" value="C:cytoplasm"/>
    <property type="evidence" value="ECO:0000318"/>
    <property type="project" value="GO_Central"/>
</dbReference>
<dbReference type="GO" id="GO:0005634">
    <property type="term" value="C:nucleus"/>
    <property type="evidence" value="ECO:0000318"/>
    <property type="project" value="GO_Central"/>
</dbReference>
<dbReference type="GO" id="GO:0005524">
    <property type="term" value="F:ATP binding"/>
    <property type="evidence" value="ECO:0007669"/>
    <property type="project" value="UniProtKB-KW"/>
</dbReference>
<dbReference type="GO" id="GO:0046811">
    <property type="term" value="F:histone deacetylase inhibitor activity"/>
    <property type="evidence" value="ECO:0007669"/>
    <property type="project" value="EnsemblMetazoa"/>
</dbReference>
<dbReference type="GO" id="GO:0046872">
    <property type="term" value="F:metal ion binding"/>
    <property type="evidence" value="ECO:0007669"/>
    <property type="project" value="UniProtKB-KW"/>
</dbReference>
<dbReference type="GO" id="GO:0106310">
    <property type="term" value="F:protein serine kinase activity"/>
    <property type="evidence" value="ECO:0007669"/>
    <property type="project" value="RHEA"/>
</dbReference>
<dbReference type="GO" id="GO:0004674">
    <property type="term" value="F:protein serine/threonine kinase activity"/>
    <property type="evidence" value="ECO:0000318"/>
    <property type="project" value="GO_Central"/>
</dbReference>
<dbReference type="GO" id="GO:0043053">
    <property type="term" value="P:dauer entry"/>
    <property type="evidence" value="ECO:0007669"/>
    <property type="project" value="EnsemblMetazoa"/>
</dbReference>
<dbReference type="GO" id="GO:0035556">
    <property type="term" value="P:intracellular signal transduction"/>
    <property type="evidence" value="ECO:0000318"/>
    <property type="project" value="GO_Central"/>
</dbReference>
<dbReference type="GO" id="GO:0010628">
    <property type="term" value="P:positive regulation of gene expression"/>
    <property type="evidence" value="ECO:0007669"/>
    <property type="project" value="EnsemblMetazoa"/>
</dbReference>
<dbReference type="GO" id="GO:0040010">
    <property type="term" value="P:positive regulation of growth rate"/>
    <property type="evidence" value="ECO:0007669"/>
    <property type="project" value="EnsemblMetazoa"/>
</dbReference>
<dbReference type="GO" id="GO:0040018">
    <property type="term" value="P:positive regulation of multicellular organism growth"/>
    <property type="evidence" value="ECO:0007669"/>
    <property type="project" value="EnsemblMetazoa"/>
</dbReference>
<dbReference type="GO" id="GO:0009408">
    <property type="term" value="P:response to heat"/>
    <property type="evidence" value="ECO:0007669"/>
    <property type="project" value="EnsemblMetazoa"/>
</dbReference>
<dbReference type="FunFam" id="3.30.200.20:FF:000003">
    <property type="entry name" value="Non-specific serine/threonine protein kinase"/>
    <property type="match status" value="1"/>
</dbReference>
<dbReference type="FunFam" id="1.10.510.10:FF:001295">
    <property type="entry name" value="Serine/threonine-protein kinase kin-29"/>
    <property type="match status" value="1"/>
</dbReference>
<dbReference type="Gene3D" id="1.10.510.10">
    <property type="entry name" value="Transferase(Phosphotransferase) domain 1"/>
    <property type="match status" value="1"/>
</dbReference>
<dbReference type="InterPro" id="IPR011009">
    <property type="entry name" value="Kinase-like_dom_sf"/>
</dbReference>
<dbReference type="InterPro" id="IPR000719">
    <property type="entry name" value="Prot_kinase_dom"/>
</dbReference>
<dbReference type="InterPro" id="IPR017441">
    <property type="entry name" value="Protein_kinase_ATP_BS"/>
</dbReference>
<dbReference type="InterPro" id="IPR008271">
    <property type="entry name" value="Ser/Thr_kinase_AS"/>
</dbReference>
<dbReference type="PANTHER" id="PTHR24346:SF82">
    <property type="entry name" value="KP78A-RELATED"/>
    <property type="match status" value="1"/>
</dbReference>
<dbReference type="PANTHER" id="PTHR24346">
    <property type="entry name" value="MAP/MICROTUBULE AFFINITY-REGULATING KINASE"/>
    <property type="match status" value="1"/>
</dbReference>
<dbReference type="Pfam" id="PF00069">
    <property type="entry name" value="Pkinase"/>
    <property type="match status" value="1"/>
</dbReference>
<dbReference type="SMART" id="SM00220">
    <property type="entry name" value="S_TKc"/>
    <property type="match status" value="1"/>
</dbReference>
<dbReference type="SUPFAM" id="SSF56112">
    <property type="entry name" value="Protein kinase-like (PK-like)"/>
    <property type="match status" value="1"/>
</dbReference>
<dbReference type="PROSITE" id="PS00107">
    <property type="entry name" value="PROTEIN_KINASE_ATP"/>
    <property type="match status" value="1"/>
</dbReference>
<dbReference type="PROSITE" id="PS50011">
    <property type="entry name" value="PROTEIN_KINASE_DOM"/>
    <property type="match status" value="1"/>
</dbReference>
<dbReference type="PROSITE" id="PS00108">
    <property type="entry name" value="PROTEIN_KINASE_ST"/>
    <property type="match status" value="1"/>
</dbReference>
<name>KIN29_CAEBR</name>
<organism>
    <name type="scientific">Caenorhabditis briggsae</name>
    <dbReference type="NCBI Taxonomy" id="6238"/>
    <lineage>
        <taxon>Eukaryota</taxon>
        <taxon>Metazoa</taxon>
        <taxon>Ecdysozoa</taxon>
        <taxon>Nematoda</taxon>
        <taxon>Chromadorea</taxon>
        <taxon>Rhabditida</taxon>
        <taxon>Rhabditina</taxon>
        <taxon>Rhabditomorpha</taxon>
        <taxon>Rhabditoidea</taxon>
        <taxon>Rhabditidae</taxon>
        <taxon>Peloderinae</taxon>
        <taxon>Caenorhabditis</taxon>
    </lineage>
</organism>
<accession>A8WRV1</accession>